<gene>
    <name type="primary">Nol12</name>
    <name type="synonym">Nop25</name>
</gene>
<sequence>MGRNKKKKRDGDDRRPRLILNFDEEKRREYLTGFHKRKVERKKAAIEEIKQRLKQEQKKLREERHQEYLKMLAEREEALEEADELERLVTAKTESVQYDHPNHTVTVTTVSDLDLSGARLLGLPLPEQGDQDGSQEEEVSSMEKPTKALPKKSKDPLLSQRISSLTATLHAHSRKKVKRKHPRRAQDSTKKPPSATRTSKTQRRRRMTGKARHNGE</sequence>
<dbReference type="EMBL" id="AY917132">
    <property type="protein sequence ID" value="AAX12419.1"/>
    <property type="molecule type" value="mRNA"/>
</dbReference>
<dbReference type="EMBL" id="BC103643">
    <property type="protein sequence ID" value="AAI03644.1"/>
    <property type="molecule type" value="mRNA"/>
</dbReference>
<dbReference type="RefSeq" id="NP_001012765.1">
    <property type="nucleotide sequence ID" value="NM_001012747.2"/>
</dbReference>
<dbReference type="SMR" id="Q5D1Z3"/>
<dbReference type="FunCoup" id="Q5D1Z3">
    <property type="interactions" value="649"/>
</dbReference>
<dbReference type="STRING" id="10116.ENSRNOP00000013764"/>
<dbReference type="PhosphoSitePlus" id="Q5D1Z3"/>
<dbReference type="PaxDb" id="10116-ENSRNOP00000013764"/>
<dbReference type="Ensembl" id="ENSRNOT00000013764.7">
    <property type="protein sequence ID" value="ENSRNOP00000013764.3"/>
    <property type="gene ID" value="ENSRNOG00000010209.8"/>
</dbReference>
<dbReference type="GeneID" id="362955"/>
<dbReference type="KEGG" id="rno:362955"/>
<dbReference type="AGR" id="RGD:1305327"/>
<dbReference type="CTD" id="79159"/>
<dbReference type="RGD" id="1305327">
    <property type="gene designation" value="Nol12"/>
</dbReference>
<dbReference type="eggNOG" id="KOG4709">
    <property type="taxonomic scope" value="Eukaryota"/>
</dbReference>
<dbReference type="GeneTree" id="ENSGT00390000015973"/>
<dbReference type="HOGENOM" id="CLU_111183_0_0_1"/>
<dbReference type="InParanoid" id="Q5D1Z3"/>
<dbReference type="OMA" id="LHMHSRK"/>
<dbReference type="OrthoDB" id="551633at2759"/>
<dbReference type="PhylomeDB" id="Q5D1Z3"/>
<dbReference type="TreeFam" id="TF323855"/>
<dbReference type="PRO" id="PR:Q5D1Z3"/>
<dbReference type="Proteomes" id="UP000002494">
    <property type="component" value="Chromosome 7"/>
</dbReference>
<dbReference type="Bgee" id="ENSRNOG00000010209">
    <property type="expression patterns" value="Expressed in skeletal muscle tissue and 19 other cell types or tissues"/>
</dbReference>
<dbReference type="GO" id="GO:0005737">
    <property type="term" value="C:cytoplasm"/>
    <property type="evidence" value="ECO:0007669"/>
    <property type="project" value="UniProtKB-SubCell"/>
</dbReference>
<dbReference type="GO" id="GO:0005730">
    <property type="term" value="C:nucleolus"/>
    <property type="evidence" value="ECO:0000314"/>
    <property type="project" value="MGI"/>
</dbReference>
<dbReference type="GO" id="GO:0042802">
    <property type="term" value="F:identical protein binding"/>
    <property type="evidence" value="ECO:0000266"/>
    <property type="project" value="RGD"/>
</dbReference>
<dbReference type="GO" id="GO:0003723">
    <property type="term" value="F:RNA binding"/>
    <property type="evidence" value="ECO:0000314"/>
    <property type="project" value="RGD"/>
</dbReference>
<dbReference type="GO" id="GO:0019843">
    <property type="term" value="F:rRNA binding"/>
    <property type="evidence" value="ECO:0000314"/>
    <property type="project" value="MGI"/>
</dbReference>
<dbReference type="GO" id="GO:0003697">
    <property type="term" value="F:single-stranded DNA binding"/>
    <property type="evidence" value="ECO:0000314"/>
    <property type="project" value="RGD"/>
</dbReference>
<dbReference type="InterPro" id="IPR019186">
    <property type="entry name" value="Nucleolar_protein_12"/>
</dbReference>
<dbReference type="PANTHER" id="PTHR14577">
    <property type="entry name" value="NUCLEOLAR PROTEIN 12"/>
    <property type="match status" value="1"/>
</dbReference>
<dbReference type="PANTHER" id="PTHR14577:SF0">
    <property type="entry name" value="NUCLEOLAR PROTEIN 12"/>
    <property type="match status" value="1"/>
</dbReference>
<dbReference type="Pfam" id="PF09805">
    <property type="entry name" value="Nop25"/>
    <property type="match status" value="1"/>
</dbReference>
<keyword id="KW-0175">Coiled coil</keyword>
<keyword id="KW-0963">Cytoplasm</keyword>
<keyword id="KW-0539">Nucleus</keyword>
<keyword id="KW-1185">Reference proteome</keyword>
<keyword id="KW-0694">RNA-binding</keyword>
<keyword id="KW-0699">rRNA-binding</keyword>
<comment type="function">
    <text evidence="2">Multifunctional RNA binding protein that plays a role in RNA metabolism and DNA maintenance. Participates in the resolution of DNA stress and the maintenance of genome integrity by localizing to sites of DNA insults. Also plays a role in proper nucleolar organization by limiting nucleolar size and regulating nucleolar number. Mechanistically, regulates the nucleolar levels of fibrillarin and nucleolin, two key players in pre-rRNA processing and ribosome assembly.</text>
</comment>
<comment type="subunit">
    <text evidence="1">Interacts with KIAA1191.</text>
</comment>
<comment type="subcellular location">
    <subcellularLocation>
        <location evidence="2">Nucleus</location>
        <location evidence="2">Nucleolus</location>
    </subcellularLocation>
    <subcellularLocation>
        <location evidence="2">Nucleus</location>
    </subcellularLocation>
    <subcellularLocation>
        <location evidence="2">Cytoplasm</location>
    </subcellularLocation>
</comment>
<comment type="similarity">
    <text evidence="5">Belongs to the RRP17 family.</text>
</comment>
<organism>
    <name type="scientific">Rattus norvegicus</name>
    <name type="common">Rat</name>
    <dbReference type="NCBI Taxonomy" id="10116"/>
    <lineage>
        <taxon>Eukaryota</taxon>
        <taxon>Metazoa</taxon>
        <taxon>Chordata</taxon>
        <taxon>Craniata</taxon>
        <taxon>Vertebrata</taxon>
        <taxon>Euteleostomi</taxon>
        <taxon>Mammalia</taxon>
        <taxon>Eutheria</taxon>
        <taxon>Euarchontoglires</taxon>
        <taxon>Glires</taxon>
        <taxon>Rodentia</taxon>
        <taxon>Myomorpha</taxon>
        <taxon>Muroidea</taxon>
        <taxon>Muridae</taxon>
        <taxon>Murinae</taxon>
        <taxon>Rattus</taxon>
    </lineage>
</organism>
<evidence type="ECO:0000250" key="1"/>
<evidence type="ECO:0000250" key="2">
    <source>
        <dbReference type="UniProtKB" id="Q9UGY1"/>
    </source>
</evidence>
<evidence type="ECO:0000255" key="3"/>
<evidence type="ECO:0000256" key="4">
    <source>
        <dbReference type="SAM" id="MobiDB-lite"/>
    </source>
</evidence>
<evidence type="ECO:0000305" key="5"/>
<protein>
    <recommendedName>
        <fullName>Nucleolar protein 12</fullName>
    </recommendedName>
    <alternativeName>
        <fullName>25 kDa nucleolar protein</fullName>
    </alternativeName>
</protein>
<accession>Q5D1Z3</accession>
<name>NOL12_RAT</name>
<proteinExistence type="evidence at transcript level"/>
<reference key="1">
    <citation type="journal article" date="2006" name="Exp. Cell Res.">
        <title>Molecular cloning and characterization of Nop25, a novel nucleolar RNA binding protein, highly conserved in vertebrate species.</title>
        <authorList>
            <person name="Suzuki S."/>
            <person name="Kanno M."/>
            <person name="Fujiwara T."/>
            <person name="Sugiyama H."/>
            <person name="Yokoyama A."/>
            <person name="Takahashi H."/>
            <person name="Tanaka J."/>
        </authorList>
    </citation>
    <scope>NUCLEOTIDE SEQUENCE [MRNA]</scope>
    <source>
        <strain>Wistar</strain>
    </source>
</reference>
<reference key="2">
    <citation type="journal article" date="2004" name="Genome Res.">
        <title>The status, quality, and expansion of the NIH full-length cDNA project: the Mammalian Gene Collection (MGC).</title>
        <authorList>
            <consortium name="The MGC Project Team"/>
        </authorList>
    </citation>
    <scope>NUCLEOTIDE SEQUENCE [LARGE SCALE MRNA]</scope>
    <source>
        <tissue>Ovary</tissue>
    </source>
</reference>
<feature type="chain" id="PRO_0000271210" description="Nucleolar protein 12">
    <location>
        <begin position="1"/>
        <end position="216"/>
    </location>
</feature>
<feature type="region of interest" description="Disordered" evidence="4">
    <location>
        <begin position="120"/>
        <end position="216"/>
    </location>
</feature>
<feature type="coiled-coil region" evidence="3">
    <location>
        <begin position="33"/>
        <end position="97"/>
    </location>
</feature>
<feature type="compositionally biased region" description="Acidic residues" evidence="4">
    <location>
        <begin position="129"/>
        <end position="140"/>
    </location>
</feature>
<feature type="compositionally biased region" description="Basic residues" evidence="4">
    <location>
        <begin position="171"/>
        <end position="183"/>
    </location>
</feature>
<feature type="compositionally biased region" description="Basic residues" evidence="4">
    <location>
        <begin position="200"/>
        <end position="216"/>
    </location>
</feature>